<sequence length="93" mass="10297">MKKTLMLLVMVVALVILPFFINHGGEYGGSDGEAESQIQALAPQYKPWFQPLYEPASGEIESLLFTLQGSLGAAVIFYILGYCKGKQRRDDRA</sequence>
<protein>
    <recommendedName>
        <fullName evidence="1">Cobalt transport protein CbiN</fullName>
    </recommendedName>
    <alternativeName>
        <fullName evidence="1">Energy-coupling factor transporter probable substrate-capture protein CbiN</fullName>
        <shortName evidence="1">ECF transporter S component CbiN</shortName>
    </alternativeName>
</protein>
<keyword id="KW-0997">Cell inner membrane</keyword>
<keyword id="KW-1003">Cell membrane</keyword>
<keyword id="KW-0169">Cobalamin biosynthesis</keyword>
<keyword id="KW-0170">Cobalt</keyword>
<keyword id="KW-0171">Cobalt transport</keyword>
<keyword id="KW-0406">Ion transport</keyword>
<keyword id="KW-0472">Membrane</keyword>
<keyword id="KW-0812">Transmembrane</keyword>
<keyword id="KW-1133">Transmembrane helix</keyword>
<keyword id="KW-0813">Transport</keyword>
<organism>
    <name type="scientific">Salmonella paratyphi B (strain ATCC BAA-1250 / SPB7)</name>
    <dbReference type="NCBI Taxonomy" id="1016998"/>
    <lineage>
        <taxon>Bacteria</taxon>
        <taxon>Pseudomonadati</taxon>
        <taxon>Pseudomonadota</taxon>
        <taxon>Gammaproteobacteria</taxon>
        <taxon>Enterobacterales</taxon>
        <taxon>Enterobacteriaceae</taxon>
        <taxon>Salmonella</taxon>
    </lineage>
</organism>
<name>CBIN_SALPB</name>
<feature type="chain" id="PRO_1000079203" description="Cobalt transport protein CbiN">
    <location>
        <begin position="1"/>
        <end position="93"/>
    </location>
</feature>
<feature type="transmembrane region" description="Helical" evidence="1">
    <location>
        <begin position="5"/>
        <end position="25"/>
    </location>
</feature>
<feature type="transmembrane region" description="Helical" evidence="1">
    <location>
        <begin position="63"/>
        <end position="83"/>
    </location>
</feature>
<evidence type="ECO:0000255" key="1">
    <source>
        <dbReference type="HAMAP-Rule" id="MF_00330"/>
    </source>
</evidence>
<gene>
    <name evidence="1" type="primary">cbiN</name>
    <name type="ordered locus">SPAB_01083</name>
</gene>
<dbReference type="EMBL" id="CP000886">
    <property type="protein sequence ID" value="ABX66504.1"/>
    <property type="molecule type" value="Genomic_DNA"/>
</dbReference>
<dbReference type="RefSeq" id="WP_000753221.1">
    <property type="nucleotide sequence ID" value="NC_010102.1"/>
</dbReference>
<dbReference type="KEGG" id="spq:SPAB_01083"/>
<dbReference type="PATRIC" id="fig|1016998.12.peg.1024"/>
<dbReference type="HOGENOM" id="CLU_136197_2_0_6"/>
<dbReference type="BioCyc" id="SENT1016998:SPAB_RS04535-MONOMER"/>
<dbReference type="UniPathway" id="UPA00148"/>
<dbReference type="Proteomes" id="UP000008556">
    <property type="component" value="Chromosome"/>
</dbReference>
<dbReference type="GO" id="GO:0005886">
    <property type="term" value="C:plasma membrane"/>
    <property type="evidence" value="ECO:0007669"/>
    <property type="project" value="UniProtKB-SubCell"/>
</dbReference>
<dbReference type="GO" id="GO:0015087">
    <property type="term" value="F:cobalt ion transmembrane transporter activity"/>
    <property type="evidence" value="ECO:0007669"/>
    <property type="project" value="UniProtKB-UniRule"/>
</dbReference>
<dbReference type="GO" id="GO:0009236">
    <property type="term" value="P:cobalamin biosynthetic process"/>
    <property type="evidence" value="ECO:0007669"/>
    <property type="project" value="UniProtKB-UniRule"/>
</dbReference>
<dbReference type="HAMAP" id="MF_00330">
    <property type="entry name" value="CbiN"/>
    <property type="match status" value="1"/>
</dbReference>
<dbReference type="InterPro" id="IPR003705">
    <property type="entry name" value="CbiN"/>
</dbReference>
<dbReference type="NCBIfam" id="TIGR01165">
    <property type="entry name" value="cbiN"/>
    <property type="match status" value="1"/>
</dbReference>
<dbReference type="NCBIfam" id="NF002780">
    <property type="entry name" value="PRK02898.1"/>
    <property type="match status" value="1"/>
</dbReference>
<dbReference type="PANTHER" id="PTHR38662">
    <property type="entry name" value="COBALT TRANSPORT PROTEIN CBIN"/>
    <property type="match status" value="1"/>
</dbReference>
<dbReference type="PANTHER" id="PTHR38662:SF1">
    <property type="entry name" value="COBALT TRANSPORT PROTEIN CBIN"/>
    <property type="match status" value="1"/>
</dbReference>
<dbReference type="Pfam" id="PF02553">
    <property type="entry name" value="CbiN"/>
    <property type="match status" value="1"/>
</dbReference>
<proteinExistence type="inferred from homology"/>
<comment type="function">
    <text evidence="1">Part of the energy-coupling factor (ECF) transporter complex CbiMNOQ involved in cobalt import.</text>
</comment>
<comment type="pathway">
    <text evidence="1">Cofactor biosynthesis; adenosylcobalamin biosynthesis.</text>
</comment>
<comment type="subunit">
    <text evidence="1">Forms an energy-coupling factor (ECF) transporter complex composed of an ATP-binding protein (A component, CbiO), a transmembrane protein (T component, CbiQ) and 2 possible substrate-capture proteins (S components, CbiM and CbiN) of unknown stoichimetry.</text>
</comment>
<comment type="subcellular location">
    <subcellularLocation>
        <location evidence="1">Cell inner membrane</location>
        <topology evidence="1">Multi-pass membrane protein</topology>
    </subcellularLocation>
</comment>
<comment type="similarity">
    <text evidence="1">Belongs to the CbiN family.</text>
</comment>
<accession>A9MT98</accession>
<reference key="1">
    <citation type="submission" date="2007-11" db="EMBL/GenBank/DDBJ databases">
        <authorList>
            <consortium name="The Salmonella enterica serovar Paratyphi B Genome Sequencing Project"/>
            <person name="McClelland M."/>
            <person name="Sanderson E.K."/>
            <person name="Porwollik S."/>
            <person name="Spieth J."/>
            <person name="Clifton W.S."/>
            <person name="Fulton R."/>
            <person name="Cordes M."/>
            <person name="Wollam A."/>
            <person name="Shah N."/>
            <person name="Pepin K."/>
            <person name="Bhonagiri V."/>
            <person name="Nash W."/>
            <person name="Johnson M."/>
            <person name="Thiruvilangam P."/>
            <person name="Wilson R."/>
        </authorList>
    </citation>
    <scope>NUCLEOTIDE SEQUENCE [LARGE SCALE GENOMIC DNA]</scope>
    <source>
        <strain>ATCC BAA-1250 / SPB7</strain>
    </source>
</reference>